<sequence length="244" mass="27275">MRIIVVDNYEEMSKKAAAMMASQVILKPDSVLGLATGDTPIGMYREIINIYKNQKMDFSKVKTFNLDEYYGLNRGNPQSYYYYMMNNLFNYVNIDKNNINIPNGMADNIEVECKEYERKIDKAGGIDLQILGIGVNGHIGFNEPNISFESETHLVNLNEKTIESNSRFFSSKEEVPTKAISMGIKSIIHSKKIILLACGSAKSDAVSKAINGKITPNIPASILQLHRDVVVIIDKEAASKLNLK</sequence>
<comment type="function">
    <text evidence="1">Catalyzes the reversible isomerization-deamination of glucosamine 6-phosphate (GlcN6P) to form fructose 6-phosphate (Fru6P) and ammonium ion.</text>
</comment>
<comment type="catalytic activity">
    <reaction evidence="1">
        <text>alpha-D-glucosamine 6-phosphate + H2O = beta-D-fructose 6-phosphate + NH4(+)</text>
        <dbReference type="Rhea" id="RHEA:12172"/>
        <dbReference type="ChEBI" id="CHEBI:15377"/>
        <dbReference type="ChEBI" id="CHEBI:28938"/>
        <dbReference type="ChEBI" id="CHEBI:57634"/>
        <dbReference type="ChEBI" id="CHEBI:75989"/>
        <dbReference type="EC" id="3.5.99.6"/>
    </reaction>
</comment>
<comment type="pathway">
    <text evidence="1">Amino-sugar metabolism; N-acetylneuraminate degradation; D-fructose 6-phosphate from N-acetylneuraminate: step 5/5.</text>
</comment>
<comment type="similarity">
    <text evidence="1">Belongs to the glucosamine/galactosamine-6-phosphate isomerase family. NagB subfamily.</text>
</comment>
<proteinExistence type="inferred from homology"/>
<dbReference type="EC" id="3.5.99.6" evidence="1"/>
<dbReference type="EMBL" id="CP001083">
    <property type="protein sequence ID" value="ACQ54430.1"/>
    <property type="molecule type" value="Genomic_DNA"/>
</dbReference>
<dbReference type="RefSeq" id="WP_003357727.1">
    <property type="nucleotide sequence ID" value="NC_012658.1"/>
</dbReference>
<dbReference type="SMR" id="C3L2N7"/>
<dbReference type="KEGG" id="cbi:CLJ_B3060"/>
<dbReference type="HOGENOM" id="CLU_049611_1_1_9"/>
<dbReference type="UniPathway" id="UPA00629">
    <property type="reaction ID" value="UER00684"/>
</dbReference>
<dbReference type="Proteomes" id="UP000002333">
    <property type="component" value="Chromosome"/>
</dbReference>
<dbReference type="GO" id="GO:0005737">
    <property type="term" value="C:cytoplasm"/>
    <property type="evidence" value="ECO:0007669"/>
    <property type="project" value="TreeGrafter"/>
</dbReference>
<dbReference type="GO" id="GO:0004342">
    <property type="term" value="F:glucosamine-6-phosphate deaminase activity"/>
    <property type="evidence" value="ECO:0007669"/>
    <property type="project" value="UniProtKB-UniRule"/>
</dbReference>
<dbReference type="GO" id="GO:0042802">
    <property type="term" value="F:identical protein binding"/>
    <property type="evidence" value="ECO:0007669"/>
    <property type="project" value="TreeGrafter"/>
</dbReference>
<dbReference type="GO" id="GO:0005975">
    <property type="term" value="P:carbohydrate metabolic process"/>
    <property type="evidence" value="ECO:0007669"/>
    <property type="project" value="InterPro"/>
</dbReference>
<dbReference type="GO" id="GO:0006043">
    <property type="term" value="P:glucosamine catabolic process"/>
    <property type="evidence" value="ECO:0007669"/>
    <property type="project" value="TreeGrafter"/>
</dbReference>
<dbReference type="GO" id="GO:0006046">
    <property type="term" value="P:N-acetylglucosamine catabolic process"/>
    <property type="evidence" value="ECO:0007669"/>
    <property type="project" value="TreeGrafter"/>
</dbReference>
<dbReference type="GO" id="GO:0019262">
    <property type="term" value="P:N-acetylneuraminate catabolic process"/>
    <property type="evidence" value="ECO:0007669"/>
    <property type="project" value="UniProtKB-UniRule"/>
</dbReference>
<dbReference type="CDD" id="cd01399">
    <property type="entry name" value="GlcN6P_deaminase"/>
    <property type="match status" value="1"/>
</dbReference>
<dbReference type="FunFam" id="3.40.50.1360:FF:000003">
    <property type="entry name" value="Glucosamine-6-phosphate deaminase"/>
    <property type="match status" value="1"/>
</dbReference>
<dbReference type="Gene3D" id="3.40.50.1360">
    <property type="match status" value="1"/>
</dbReference>
<dbReference type="HAMAP" id="MF_01241">
    <property type="entry name" value="GlcN6P_deamin"/>
    <property type="match status" value="1"/>
</dbReference>
<dbReference type="InterPro" id="IPR006148">
    <property type="entry name" value="Glc/Gal-6P_isomerase"/>
</dbReference>
<dbReference type="InterPro" id="IPR004547">
    <property type="entry name" value="Glucosamine6P_isomerase"/>
</dbReference>
<dbReference type="InterPro" id="IPR018321">
    <property type="entry name" value="Glucosamine6P_isomerase_CS"/>
</dbReference>
<dbReference type="InterPro" id="IPR037171">
    <property type="entry name" value="NagB/RpiA_transferase-like"/>
</dbReference>
<dbReference type="NCBIfam" id="TIGR00502">
    <property type="entry name" value="nagB"/>
    <property type="match status" value="1"/>
</dbReference>
<dbReference type="NCBIfam" id="NF001684">
    <property type="entry name" value="PRK00443.1-4"/>
    <property type="match status" value="1"/>
</dbReference>
<dbReference type="PANTHER" id="PTHR11280">
    <property type="entry name" value="GLUCOSAMINE-6-PHOSPHATE ISOMERASE"/>
    <property type="match status" value="1"/>
</dbReference>
<dbReference type="PANTHER" id="PTHR11280:SF5">
    <property type="entry name" value="GLUCOSAMINE-6-PHOSPHATE ISOMERASE"/>
    <property type="match status" value="1"/>
</dbReference>
<dbReference type="Pfam" id="PF01182">
    <property type="entry name" value="Glucosamine_iso"/>
    <property type="match status" value="1"/>
</dbReference>
<dbReference type="SUPFAM" id="SSF100950">
    <property type="entry name" value="NagB/RpiA/CoA transferase-like"/>
    <property type="match status" value="1"/>
</dbReference>
<dbReference type="PROSITE" id="PS01161">
    <property type="entry name" value="GLC_GALNAC_ISOMERASE"/>
    <property type="match status" value="1"/>
</dbReference>
<gene>
    <name evidence="1" type="primary">nagB</name>
    <name type="ordered locus">CLJ_B3060</name>
</gene>
<reference key="1">
    <citation type="submission" date="2008-05" db="EMBL/GenBank/DDBJ databases">
        <title>Genome sequence of Clostridium botulinum Ba4 strain 657.</title>
        <authorList>
            <person name="Shrivastava S."/>
            <person name="Brown J.L."/>
            <person name="Bruce D."/>
            <person name="Detter C."/>
            <person name="Munk C."/>
            <person name="Smith L.A."/>
            <person name="Smith T.J."/>
            <person name="Sutton G."/>
            <person name="Brettin T.S."/>
        </authorList>
    </citation>
    <scope>NUCLEOTIDE SEQUENCE [LARGE SCALE GENOMIC DNA]</scope>
    <source>
        <strain>657 / Type Ba4</strain>
    </source>
</reference>
<protein>
    <recommendedName>
        <fullName evidence="1">Glucosamine-6-phosphate deaminase</fullName>
        <ecNumber evidence="1">3.5.99.6</ecNumber>
    </recommendedName>
    <alternativeName>
        <fullName evidence="1">GlcN6P deaminase</fullName>
        <shortName evidence="1">GNPDA</shortName>
    </alternativeName>
    <alternativeName>
        <fullName evidence="1">Glucosamine-6-phosphate isomerase</fullName>
    </alternativeName>
</protein>
<keyword id="KW-0119">Carbohydrate metabolism</keyword>
<keyword id="KW-0378">Hydrolase</keyword>
<organism>
    <name type="scientific">Clostridium botulinum (strain 657 / Type Ba4)</name>
    <dbReference type="NCBI Taxonomy" id="515621"/>
    <lineage>
        <taxon>Bacteria</taxon>
        <taxon>Bacillati</taxon>
        <taxon>Bacillota</taxon>
        <taxon>Clostridia</taxon>
        <taxon>Eubacteriales</taxon>
        <taxon>Clostridiaceae</taxon>
        <taxon>Clostridium</taxon>
    </lineage>
</organism>
<accession>C3L2N7</accession>
<feature type="chain" id="PRO_1000214079" description="Glucosamine-6-phosphate deaminase">
    <location>
        <begin position="1"/>
        <end position="244"/>
    </location>
</feature>
<feature type="active site" description="Proton acceptor; for enolization step" evidence="1">
    <location>
        <position position="67"/>
    </location>
</feature>
<feature type="active site" description="For ring-opening step" evidence="1">
    <location>
        <position position="136"/>
    </location>
</feature>
<feature type="active site" description="Proton acceptor; for ring-opening step" evidence="1">
    <location>
        <position position="138"/>
    </location>
</feature>
<feature type="active site" description="For ring-opening step" evidence="1">
    <location>
        <position position="143"/>
    </location>
</feature>
<name>NAGB_CLOB6</name>
<evidence type="ECO:0000255" key="1">
    <source>
        <dbReference type="HAMAP-Rule" id="MF_01241"/>
    </source>
</evidence>